<reference key="1">
    <citation type="journal article" date="2005" name="Nucleic Acids Res.">
        <title>Genomic blueprint of Hahella chejuensis, a marine microbe producing an algicidal agent.</title>
        <authorList>
            <person name="Jeong H."/>
            <person name="Yim J.H."/>
            <person name="Lee C."/>
            <person name="Choi S.-H."/>
            <person name="Park Y.K."/>
            <person name="Yoon S.H."/>
            <person name="Hur C.-G."/>
            <person name="Kang H.-Y."/>
            <person name="Kim D."/>
            <person name="Lee H.H."/>
            <person name="Park K.H."/>
            <person name="Park S.-H."/>
            <person name="Park H.-S."/>
            <person name="Lee H.K."/>
            <person name="Oh T.K."/>
            <person name="Kim J.F."/>
        </authorList>
    </citation>
    <scope>NUCLEOTIDE SEQUENCE [LARGE SCALE GENOMIC DNA]</scope>
    <source>
        <strain>KCTC 2396</strain>
    </source>
</reference>
<name>RS9_HAHCH</name>
<organism>
    <name type="scientific">Hahella chejuensis (strain KCTC 2396)</name>
    <dbReference type="NCBI Taxonomy" id="349521"/>
    <lineage>
        <taxon>Bacteria</taxon>
        <taxon>Pseudomonadati</taxon>
        <taxon>Pseudomonadota</taxon>
        <taxon>Gammaproteobacteria</taxon>
        <taxon>Oceanospirillales</taxon>
        <taxon>Hahellaceae</taxon>
        <taxon>Hahella</taxon>
    </lineage>
</organism>
<sequence>MSVTQYYGTGRRKTSTARVFLRPGSGKITVNQTDLDSYFGRETARMVVRQPLELLGSIGNFDVFVTVKGGGPSGQAGAIRHGITRALIQYDEANRSPLRKAGYVTRDAREVERKKVGLRKARKRPQFSKR</sequence>
<dbReference type="EMBL" id="CP000155">
    <property type="protein sequence ID" value="ABC32551.1"/>
    <property type="molecule type" value="Genomic_DNA"/>
</dbReference>
<dbReference type="RefSeq" id="WP_011399610.1">
    <property type="nucleotide sequence ID" value="NC_007645.1"/>
</dbReference>
<dbReference type="SMR" id="Q2S9X3"/>
<dbReference type="STRING" id="349521.HCH_05901"/>
<dbReference type="KEGG" id="hch:HCH_05901"/>
<dbReference type="eggNOG" id="COG0103">
    <property type="taxonomic scope" value="Bacteria"/>
</dbReference>
<dbReference type="HOGENOM" id="CLU_046483_2_1_6"/>
<dbReference type="OrthoDB" id="9803965at2"/>
<dbReference type="Proteomes" id="UP000000238">
    <property type="component" value="Chromosome"/>
</dbReference>
<dbReference type="GO" id="GO:0022627">
    <property type="term" value="C:cytosolic small ribosomal subunit"/>
    <property type="evidence" value="ECO:0007669"/>
    <property type="project" value="TreeGrafter"/>
</dbReference>
<dbReference type="GO" id="GO:0003723">
    <property type="term" value="F:RNA binding"/>
    <property type="evidence" value="ECO:0007669"/>
    <property type="project" value="TreeGrafter"/>
</dbReference>
<dbReference type="GO" id="GO:0003735">
    <property type="term" value="F:structural constituent of ribosome"/>
    <property type="evidence" value="ECO:0007669"/>
    <property type="project" value="InterPro"/>
</dbReference>
<dbReference type="GO" id="GO:0006412">
    <property type="term" value="P:translation"/>
    <property type="evidence" value="ECO:0007669"/>
    <property type="project" value="UniProtKB-UniRule"/>
</dbReference>
<dbReference type="FunFam" id="3.30.230.10:FF:000001">
    <property type="entry name" value="30S ribosomal protein S9"/>
    <property type="match status" value="1"/>
</dbReference>
<dbReference type="Gene3D" id="3.30.230.10">
    <property type="match status" value="1"/>
</dbReference>
<dbReference type="HAMAP" id="MF_00532_B">
    <property type="entry name" value="Ribosomal_uS9_B"/>
    <property type="match status" value="1"/>
</dbReference>
<dbReference type="InterPro" id="IPR020568">
    <property type="entry name" value="Ribosomal_Su5_D2-typ_SF"/>
</dbReference>
<dbReference type="InterPro" id="IPR000754">
    <property type="entry name" value="Ribosomal_uS9"/>
</dbReference>
<dbReference type="InterPro" id="IPR023035">
    <property type="entry name" value="Ribosomal_uS9_bac/plastid"/>
</dbReference>
<dbReference type="InterPro" id="IPR020574">
    <property type="entry name" value="Ribosomal_uS9_CS"/>
</dbReference>
<dbReference type="InterPro" id="IPR014721">
    <property type="entry name" value="Ribsml_uS5_D2-typ_fold_subgr"/>
</dbReference>
<dbReference type="NCBIfam" id="NF001099">
    <property type="entry name" value="PRK00132.1"/>
    <property type="match status" value="1"/>
</dbReference>
<dbReference type="PANTHER" id="PTHR21569">
    <property type="entry name" value="RIBOSOMAL PROTEIN S9"/>
    <property type="match status" value="1"/>
</dbReference>
<dbReference type="PANTHER" id="PTHR21569:SF1">
    <property type="entry name" value="SMALL RIBOSOMAL SUBUNIT PROTEIN US9M"/>
    <property type="match status" value="1"/>
</dbReference>
<dbReference type="Pfam" id="PF00380">
    <property type="entry name" value="Ribosomal_S9"/>
    <property type="match status" value="1"/>
</dbReference>
<dbReference type="SUPFAM" id="SSF54211">
    <property type="entry name" value="Ribosomal protein S5 domain 2-like"/>
    <property type="match status" value="1"/>
</dbReference>
<dbReference type="PROSITE" id="PS00360">
    <property type="entry name" value="RIBOSOMAL_S9"/>
    <property type="match status" value="1"/>
</dbReference>
<accession>Q2S9X3</accession>
<protein>
    <recommendedName>
        <fullName evidence="1">Small ribosomal subunit protein uS9</fullName>
    </recommendedName>
    <alternativeName>
        <fullName evidence="2">30S ribosomal protein S9</fullName>
    </alternativeName>
</protein>
<evidence type="ECO:0000255" key="1">
    <source>
        <dbReference type="HAMAP-Rule" id="MF_00532"/>
    </source>
</evidence>
<evidence type="ECO:0000305" key="2"/>
<gene>
    <name evidence="1" type="primary">rpsI</name>
    <name type="ordered locus">HCH_05901</name>
</gene>
<feature type="chain" id="PRO_1000051230" description="Small ribosomal subunit protein uS9">
    <location>
        <begin position="1"/>
        <end position="130"/>
    </location>
</feature>
<proteinExistence type="inferred from homology"/>
<comment type="similarity">
    <text evidence="1">Belongs to the universal ribosomal protein uS9 family.</text>
</comment>
<keyword id="KW-1185">Reference proteome</keyword>
<keyword id="KW-0687">Ribonucleoprotein</keyword>
<keyword id="KW-0689">Ribosomal protein</keyword>